<reference key="1">
    <citation type="journal article" date="2009" name="PLoS Pathog.">
        <title>Molecular evolutionary consequences of niche restriction in Francisella tularensis, a facultative intracellular pathogen.</title>
        <authorList>
            <person name="Larsson P."/>
            <person name="Elfsmark D."/>
            <person name="Svensson K."/>
            <person name="Wikstroem P."/>
            <person name="Forsman M."/>
            <person name="Brettin T."/>
            <person name="Keim P."/>
            <person name="Johansson A."/>
        </authorList>
    </citation>
    <scope>NUCLEOTIDE SEQUENCE [LARGE SCALE GENOMIC DNA]</scope>
    <source>
        <strain>FSC147</strain>
    </source>
</reference>
<organism>
    <name type="scientific">Francisella tularensis subsp. mediasiatica (strain FSC147)</name>
    <dbReference type="NCBI Taxonomy" id="441952"/>
    <lineage>
        <taxon>Bacteria</taxon>
        <taxon>Pseudomonadati</taxon>
        <taxon>Pseudomonadota</taxon>
        <taxon>Gammaproteobacteria</taxon>
        <taxon>Thiotrichales</taxon>
        <taxon>Francisellaceae</taxon>
        <taxon>Francisella</taxon>
    </lineage>
</organism>
<dbReference type="EC" id="4.3.3.6" evidence="1"/>
<dbReference type="EC" id="3.5.1.2" evidence="1"/>
<dbReference type="EMBL" id="CP000915">
    <property type="protein sequence ID" value="ACD31228.1"/>
    <property type="molecule type" value="Genomic_DNA"/>
</dbReference>
<dbReference type="SMR" id="B2SDL4"/>
<dbReference type="MEROPS" id="C26.A32"/>
<dbReference type="KEGG" id="ftm:FTM_1392"/>
<dbReference type="HOGENOM" id="CLU_069674_2_0_6"/>
<dbReference type="UniPathway" id="UPA00245"/>
<dbReference type="GO" id="GO:0005829">
    <property type="term" value="C:cytosol"/>
    <property type="evidence" value="ECO:0007669"/>
    <property type="project" value="TreeGrafter"/>
</dbReference>
<dbReference type="GO" id="GO:1903600">
    <property type="term" value="C:glutaminase complex"/>
    <property type="evidence" value="ECO:0007669"/>
    <property type="project" value="TreeGrafter"/>
</dbReference>
<dbReference type="GO" id="GO:0004359">
    <property type="term" value="F:glutaminase activity"/>
    <property type="evidence" value="ECO:0007669"/>
    <property type="project" value="UniProtKB-UniRule"/>
</dbReference>
<dbReference type="GO" id="GO:0036381">
    <property type="term" value="F:pyridoxal 5'-phosphate synthase (glutamine hydrolysing) activity"/>
    <property type="evidence" value="ECO:0007669"/>
    <property type="project" value="UniProtKB-UniRule"/>
</dbReference>
<dbReference type="GO" id="GO:0006543">
    <property type="term" value="P:glutamine catabolic process"/>
    <property type="evidence" value="ECO:0007669"/>
    <property type="project" value="UniProtKB-UniRule"/>
</dbReference>
<dbReference type="GO" id="GO:0042823">
    <property type="term" value="P:pyridoxal phosphate biosynthetic process"/>
    <property type="evidence" value="ECO:0007669"/>
    <property type="project" value="UniProtKB-UniRule"/>
</dbReference>
<dbReference type="GO" id="GO:0008614">
    <property type="term" value="P:pyridoxine metabolic process"/>
    <property type="evidence" value="ECO:0007669"/>
    <property type="project" value="TreeGrafter"/>
</dbReference>
<dbReference type="CDD" id="cd01749">
    <property type="entry name" value="GATase1_PB"/>
    <property type="match status" value="1"/>
</dbReference>
<dbReference type="Gene3D" id="3.40.50.880">
    <property type="match status" value="1"/>
</dbReference>
<dbReference type="HAMAP" id="MF_01615">
    <property type="entry name" value="PdxT"/>
    <property type="match status" value="1"/>
</dbReference>
<dbReference type="InterPro" id="IPR029062">
    <property type="entry name" value="Class_I_gatase-like"/>
</dbReference>
<dbReference type="InterPro" id="IPR002161">
    <property type="entry name" value="PdxT/SNO"/>
</dbReference>
<dbReference type="InterPro" id="IPR021196">
    <property type="entry name" value="PdxT/SNO_CS"/>
</dbReference>
<dbReference type="NCBIfam" id="TIGR03800">
    <property type="entry name" value="PLP_synth_Pdx2"/>
    <property type="match status" value="1"/>
</dbReference>
<dbReference type="NCBIfam" id="NF010050">
    <property type="entry name" value="PRK13526.1"/>
    <property type="match status" value="1"/>
</dbReference>
<dbReference type="PANTHER" id="PTHR31559">
    <property type="entry name" value="PYRIDOXAL 5'-PHOSPHATE SYNTHASE SUBUNIT SNO"/>
    <property type="match status" value="1"/>
</dbReference>
<dbReference type="PANTHER" id="PTHR31559:SF0">
    <property type="entry name" value="PYRIDOXAL 5'-PHOSPHATE SYNTHASE SUBUNIT SNO1-RELATED"/>
    <property type="match status" value="1"/>
</dbReference>
<dbReference type="Pfam" id="PF01174">
    <property type="entry name" value="SNO"/>
    <property type="match status" value="1"/>
</dbReference>
<dbReference type="PIRSF" id="PIRSF005639">
    <property type="entry name" value="Glut_amidoT_SNO"/>
    <property type="match status" value="1"/>
</dbReference>
<dbReference type="SUPFAM" id="SSF52317">
    <property type="entry name" value="Class I glutamine amidotransferase-like"/>
    <property type="match status" value="1"/>
</dbReference>
<dbReference type="PROSITE" id="PS01236">
    <property type="entry name" value="PDXT_SNO_1"/>
    <property type="match status" value="1"/>
</dbReference>
<dbReference type="PROSITE" id="PS51130">
    <property type="entry name" value="PDXT_SNO_2"/>
    <property type="match status" value="1"/>
</dbReference>
<accession>B2SDL4</accession>
<comment type="function">
    <text evidence="1">Catalyzes the hydrolysis of glutamine to glutamate and ammonia as part of the biosynthesis of pyridoxal 5'-phosphate. The resulting ammonia molecule is channeled to the active site of PdxS.</text>
</comment>
<comment type="catalytic activity">
    <reaction evidence="1">
        <text>aldehydo-D-ribose 5-phosphate + D-glyceraldehyde 3-phosphate + L-glutamine = pyridoxal 5'-phosphate + L-glutamate + phosphate + 3 H2O + H(+)</text>
        <dbReference type="Rhea" id="RHEA:31507"/>
        <dbReference type="ChEBI" id="CHEBI:15377"/>
        <dbReference type="ChEBI" id="CHEBI:15378"/>
        <dbReference type="ChEBI" id="CHEBI:29985"/>
        <dbReference type="ChEBI" id="CHEBI:43474"/>
        <dbReference type="ChEBI" id="CHEBI:58273"/>
        <dbReference type="ChEBI" id="CHEBI:58359"/>
        <dbReference type="ChEBI" id="CHEBI:59776"/>
        <dbReference type="ChEBI" id="CHEBI:597326"/>
        <dbReference type="EC" id="4.3.3.6"/>
    </reaction>
</comment>
<comment type="catalytic activity">
    <reaction evidence="1">
        <text>L-glutamine + H2O = L-glutamate + NH4(+)</text>
        <dbReference type="Rhea" id="RHEA:15889"/>
        <dbReference type="ChEBI" id="CHEBI:15377"/>
        <dbReference type="ChEBI" id="CHEBI:28938"/>
        <dbReference type="ChEBI" id="CHEBI:29985"/>
        <dbReference type="ChEBI" id="CHEBI:58359"/>
        <dbReference type="EC" id="3.5.1.2"/>
    </reaction>
</comment>
<comment type="pathway">
    <text evidence="1">Cofactor biosynthesis; pyridoxal 5'-phosphate biosynthesis.</text>
</comment>
<comment type="subunit">
    <text evidence="1">In the presence of PdxS, forms a dodecamer of heterodimers. Only shows activity in the heterodimer.</text>
</comment>
<comment type="similarity">
    <text evidence="1">Belongs to the glutaminase PdxT/SNO family.</text>
</comment>
<sequence>MTQKVGVLAIQGGYQKHADMFKSLGVEVKLVKFNNDFDSIDRLVIPGGESTTLLNLLNKHQIFDKLYNFCSSKPVFGTCAGSIILSKGEGYLNLLDLEVQRNAYGRQVDSFVADISFNDKNITGVFIRAPKFIVVGNQVDILSKYQNSPVLLRQANILVSSFHPELTQDPTIHEYFLAM</sequence>
<protein>
    <recommendedName>
        <fullName evidence="1">Pyridoxal 5'-phosphate synthase subunit PdxT</fullName>
        <ecNumber evidence="1">4.3.3.6</ecNumber>
    </recommendedName>
    <alternativeName>
        <fullName evidence="1">Pdx2</fullName>
    </alternativeName>
    <alternativeName>
        <fullName evidence="1">Pyridoxal 5'-phosphate synthase glutaminase subunit</fullName>
        <ecNumber evidence="1">3.5.1.2</ecNumber>
    </alternativeName>
</protein>
<name>PDXT_FRATM</name>
<gene>
    <name evidence="1" type="primary">pdxT</name>
    <name type="ordered locus">FTM_1392</name>
</gene>
<feature type="chain" id="PRO_1000185889" description="Pyridoxal 5'-phosphate synthase subunit PdxT">
    <location>
        <begin position="1"/>
        <end position="179"/>
    </location>
</feature>
<feature type="active site" description="Nucleophile" evidence="1">
    <location>
        <position position="79"/>
    </location>
</feature>
<feature type="active site" description="Charge relay system" evidence="1">
    <location>
        <position position="163"/>
    </location>
</feature>
<feature type="active site" description="Charge relay system" evidence="1">
    <location>
        <position position="165"/>
    </location>
</feature>
<feature type="binding site" evidence="1">
    <location>
        <begin position="48"/>
        <end position="50"/>
    </location>
    <ligand>
        <name>L-glutamine</name>
        <dbReference type="ChEBI" id="CHEBI:58359"/>
    </ligand>
</feature>
<feature type="binding site" evidence="1">
    <location>
        <position position="101"/>
    </location>
    <ligand>
        <name>L-glutamine</name>
        <dbReference type="ChEBI" id="CHEBI:58359"/>
    </ligand>
</feature>
<feature type="binding site" evidence="1">
    <location>
        <begin position="127"/>
        <end position="128"/>
    </location>
    <ligand>
        <name>L-glutamine</name>
        <dbReference type="ChEBI" id="CHEBI:58359"/>
    </ligand>
</feature>
<evidence type="ECO:0000255" key="1">
    <source>
        <dbReference type="HAMAP-Rule" id="MF_01615"/>
    </source>
</evidence>
<keyword id="KW-0315">Glutamine amidotransferase</keyword>
<keyword id="KW-0378">Hydrolase</keyword>
<keyword id="KW-0456">Lyase</keyword>
<keyword id="KW-0663">Pyridoxal phosphate</keyword>
<proteinExistence type="inferred from homology"/>